<sequence length="188" mass="21040">MVKSQPILRYILRGIPAIAVAVLLSACSANNTAKNMHPETRAVGSETSSLQASQDEFENLVRNVDVKSRIMDQYADWKGVRYRLGGSTKKGIDCSGFVQRTFREQFGLELPRSTYEQQEMGKSVSRSNLRTGDLVLFRAGSTGRHVGIYIGNNQFVHASTSSGVIISSMNEPYWKKRYNEARRVLSRS</sequence>
<reference key="1">
    <citation type="journal article" date="2001" name="Nature">
        <title>Genome sequence of enterohaemorrhagic Escherichia coli O157:H7.</title>
        <authorList>
            <person name="Perna N.T."/>
            <person name="Plunkett G. III"/>
            <person name="Burland V."/>
            <person name="Mau B."/>
            <person name="Glasner J.D."/>
            <person name="Rose D.J."/>
            <person name="Mayhew G.F."/>
            <person name="Evans P.S."/>
            <person name="Gregor J."/>
            <person name="Kirkpatrick H.A."/>
            <person name="Posfai G."/>
            <person name="Hackett J."/>
            <person name="Klink S."/>
            <person name="Boutin A."/>
            <person name="Shao Y."/>
            <person name="Miller L."/>
            <person name="Grotbeck E.J."/>
            <person name="Davis N.W."/>
            <person name="Lim A."/>
            <person name="Dimalanta E.T."/>
            <person name="Potamousis K."/>
            <person name="Apodaca J."/>
            <person name="Anantharaman T.S."/>
            <person name="Lin J."/>
            <person name="Yen G."/>
            <person name="Schwartz D.C."/>
            <person name="Welch R.A."/>
            <person name="Blattner F.R."/>
        </authorList>
    </citation>
    <scope>NUCLEOTIDE SEQUENCE [LARGE SCALE GENOMIC DNA]</scope>
    <source>
        <strain>O157:H7 / EDL933 / ATCC 700927 / EHEC</strain>
    </source>
</reference>
<reference key="2">
    <citation type="journal article" date="2001" name="DNA Res.">
        <title>Complete genome sequence of enterohemorrhagic Escherichia coli O157:H7 and genomic comparison with a laboratory strain K-12.</title>
        <authorList>
            <person name="Hayashi T."/>
            <person name="Makino K."/>
            <person name="Ohnishi M."/>
            <person name="Kurokawa K."/>
            <person name="Ishii K."/>
            <person name="Yokoyama K."/>
            <person name="Han C.-G."/>
            <person name="Ohtsubo E."/>
            <person name="Nakayama K."/>
            <person name="Murata T."/>
            <person name="Tanaka M."/>
            <person name="Tobe T."/>
            <person name="Iida T."/>
            <person name="Takami H."/>
            <person name="Honda T."/>
            <person name="Sasakawa C."/>
            <person name="Ogasawara N."/>
            <person name="Yasunaga T."/>
            <person name="Kuhara S."/>
            <person name="Shiba T."/>
            <person name="Hattori M."/>
            <person name="Shinagawa H."/>
        </authorList>
    </citation>
    <scope>NUCLEOTIDE SEQUENCE [LARGE SCALE GENOMIC DNA]</scope>
    <source>
        <strain>O157:H7 / Sakai / RIMD 0509952 / EHEC</strain>
    </source>
</reference>
<feature type="signal peptide" evidence="2">
    <location>
        <begin position="1"/>
        <end position="26"/>
    </location>
</feature>
<feature type="chain" id="PRO_0000045241" description="Murein DD-endopeptidase MepS/Murein LD-carboxypeptidase">
    <location>
        <begin position="27"/>
        <end position="188"/>
    </location>
</feature>
<feature type="domain" description="NlpC/P60" evidence="3">
    <location>
        <begin position="64"/>
        <end position="185"/>
    </location>
</feature>
<feature type="active site" description="Nucleophile" evidence="3">
    <location>
        <position position="94"/>
    </location>
</feature>
<feature type="active site" description="Proton acceptor" evidence="3">
    <location>
        <position position="145"/>
    </location>
</feature>
<feature type="active site" evidence="3">
    <location>
        <position position="157"/>
    </location>
</feature>
<feature type="lipid moiety-binding region" description="N-palmitoyl cysteine" evidence="2">
    <location>
        <position position="27"/>
    </location>
</feature>
<feature type="lipid moiety-binding region" description="S-diacylglycerol cysteine" evidence="2">
    <location>
        <position position="27"/>
    </location>
</feature>
<proteinExistence type="inferred from homology"/>
<evidence type="ECO:0000250" key="1"/>
<evidence type="ECO:0000255" key="2">
    <source>
        <dbReference type="PROSITE-ProRule" id="PRU00303"/>
    </source>
</evidence>
<evidence type="ECO:0000255" key="3">
    <source>
        <dbReference type="PROSITE-ProRule" id="PRU01284"/>
    </source>
</evidence>
<evidence type="ECO:0000305" key="4"/>
<protein>
    <recommendedName>
        <fullName>Murein DD-endopeptidase MepS/Murein LD-carboxypeptidase</fullName>
        <ecNumber>3.4.-.-</ecNumber>
        <ecNumber>3.4.17.13</ecNumber>
    </recommendedName>
    <alternativeName>
        <fullName>Lipoprotein Spr</fullName>
    </alternativeName>
    <alternativeName>
        <fullName>Murein hydrolase MepS</fullName>
    </alternativeName>
</protein>
<accession>P0AFV6</accession>
<accession>O08016</accession>
<accession>P77685</accession>
<dbReference type="EC" id="3.4.-.-"/>
<dbReference type="EC" id="3.4.17.13"/>
<dbReference type="EMBL" id="AE005174">
    <property type="protein sequence ID" value="AAG57313.1"/>
    <property type="molecule type" value="Genomic_DNA"/>
</dbReference>
<dbReference type="EMBL" id="BA000007">
    <property type="protein sequence ID" value="BAB36490.1"/>
    <property type="molecule type" value="Genomic_DNA"/>
</dbReference>
<dbReference type="PIR" id="C91012">
    <property type="entry name" value="C91012"/>
</dbReference>
<dbReference type="PIR" id="E85856">
    <property type="entry name" value="E85856"/>
</dbReference>
<dbReference type="RefSeq" id="NP_311094.1">
    <property type="nucleotide sequence ID" value="NC_002695.1"/>
</dbReference>
<dbReference type="RefSeq" id="WP_000241011.1">
    <property type="nucleotide sequence ID" value="NZ_VOAI01000001.1"/>
</dbReference>
<dbReference type="BMRB" id="P0AFV6"/>
<dbReference type="SMR" id="P0AFV6"/>
<dbReference type="STRING" id="155864.Z3434"/>
<dbReference type="MEROPS" id="C40.004"/>
<dbReference type="GeneID" id="916771"/>
<dbReference type="GeneID" id="93775006"/>
<dbReference type="KEGG" id="ece:Z3434"/>
<dbReference type="KEGG" id="ecs:ECs_3067"/>
<dbReference type="PATRIC" id="fig|386585.9.peg.3199"/>
<dbReference type="eggNOG" id="COG0791">
    <property type="taxonomic scope" value="Bacteria"/>
</dbReference>
<dbReference type="HOGENOM" id="CLU_016043_9_1_6"/>
<dbReference type="OMA" id="MHAVNDK"/>
<dbReference type="UniPathway" id="UPA00963"/>
<dbReference type="Proteomes" id="UP000000558">
    <property type="component" value="Chromosome"/>
</dbReference>
<dbReference type="Proteomes" id="UP000002519">
    <property type="component" value="Chromosome"/>
</dbReference>
<dbReference type="GO" id="GO:0009279">
    <property type="term" value="C:cell outer membrane"/>
    <property type="evidence" value="ECO:0007669"/>
    <property type="project" value="UniProtKB-SubCell"/>
</dbReference>
<dbReference type="GO" id="GO:0008234">
    <property type="term" value="F:cysteine-type peptidase activity"/>
    <property type="evidence" value="ECO:0007669"/>
    <property type="project" value="UniProtKB-KW"/>
</dbReference>
<dbReference type="GO" id="GO:0106415">
    <property type="term" value="F:muramoyltetrapeptide carboxypeptidase activity"/>
    <property type="evidence" value="ECO:0007669"/>
    <property type="project" value="UniProtKB-EC"/>
</dbReference>
<dbReference type="GO" id="GO:0045227">
    <property type="term" value="P:capsule polysaccharide biosynthetic process"/>
    <property type="evidence" value="ECO:0007669"/>
    <property type="project" value="UniProtKB-UniPathway"/>
</dbReference>
<dbReference type="GO" id="GO:0006508">
    <property type="term" value="P:proteolysis"/>
    <property type="evidence" value="ECO:0007669"/>
    <property type="project" value="UniProtKB-KW"/>
</dbReference>
<dbReference type="FunFam" id="3.90.1720.10:FF:000001">
    <property type="entry name" value="Bifunctional murein DD-endopeptidase/murein LD-carboxypeptidase"/>
    <property type="match status" value="1"/>
</dbReference>
<dbReference type="Gene3D" id="3.90.1720.10">
    <property type="entry name" value="endopeptidase domain like (from Nostoc punctiforme)"/>
    <property type="match status" value="1"/>
</dbReference>
<dbReference type="InterPro" id="IPR052062">
    <property type="entry name" value="Murein_DD/LD_carboxypeptidase"/>
</dbReference>
<dbReference type="InterPro" id="IPR000064">
    <property type="entry name" value="NLP_P60_dom"/>
</dbReference>
<dbReference type="InterPro" id="IPR038765">
    <property type="entry name" value="Papain-like_cys_pep_sf"/>
</dbReference>
<dbReference type="NCBIfam" id="NF008096">
    <property type="entry name" value="PRK10838.1"/>
    <property type="match status" value="1"/>
</dbReference>
<dbReference type="PANTHER" id="PTHR47360">
    <property type="entry name" value="MUREIN DD-ENDOPEPTIDASE MEPS/MUREIN LD-CARBOXYPEPTIDASE"/>
    <property type="match status" value="1"/>
</dbReference>
<dbReference type="PANTHER" id="PTHR47360:SF3">
    <property type="entry name" value="MUREIN DD-ENDOPEPTIDASE MEPS_MUREIN LD-CARBOXYPEPTIDASE"/>
    <property type="match status" value="1"/>
</dbReference>
<dbReference type="Pfam" id="PF00877">
    <property type="entry name" value="NLPC_P60"/>
    <property type="match status" value="1"/>
</dbReference>
<dbReference type="SUPFAM" id="SSF54001">
    <property type="entry name" value="Cysteine proteinases"/>
    <property type="match status" value="1"/>
</dbReference>
<dbReference type="PROSITE" id="PS51935">
    <property type="entry name" value="NLPC_P60"/>
    <property type="match status" value="1"/>
</dbReference>
<dbReference type="PROSITE" id="PS51257">
    <property type="entry name" value="PROKAR_LIPOPROTEIN"/>
    <property type="match status" value="1"/>
</dbReference>
<organism>
    <name type="scientific">Escherichia coli O157:H7</name>
    <dbReference type="NCBI Taxonomy" id="83334"/>
    <lineage>
        <taxon>Bacteria</taxon>
        <taxon>Pseudomonadati</taxon>
        <taxon>Pseudomonadota</taxon>
        <taxon>Gammaproteobacteria</taxon>
        <taxon>Enterobacterales</taxon>
        <taxon>Enterobacteriaceae</taxon>
        <taxon>Escherichia</taxon>
    </lineage>
</organism>
<gene>
    <name type="primary">mepS</name>
    <name type="synonym">spr</name>
    <name type="ordered locus">Z3434</name>
    <name type="ordered locus">ECs3067</name>
</gene>
<name>MEPS_ECO57</name>
<comment type="function">
    <text evidence="1">A murein DD-endopeptidase with specificity for D-Ala-meso-diaminopimelic acid (mDAP) cross-links. Its role is probably to cleave D-Ala-mDAP cross-links to allow insertion of new glycans and thus cell wall expansion. Functionally redundant with MepM and MepH. Also has weak LD-carboxypeptidase activity on L-mDAP-D-Ala peptide bonds (By similarity).</text>
</comment>
<comment type="catalytic activity">
    <reaction>
        <text>N-acetyl-D-glucosaminyl-N-acetylmuramoyl-L-alanyl-meso-2,6-diaminoheptanedioyl-D-alanine + H2O = N-acetyl-D-glucosaminyl-N-acetylmuramoyl-L-alanyl-meso-2,6-diaminoheptanedioate + D-alanine</text>
        <dbReference type="Rhea" id="RHEA:48688"/>
        <dbReference type="ChEBI" id="CHEBI:15377"/>
        <dbReference type="ChEBI" id="CHEBI:57416"/>
        <dbReference type="ChEBI" id="CHEBI:233808"/>
        <dbReference type="ChEBI" id="CHEBI:233809"/>
        <dbReference type="EC" id="3.4.17.13"/>
    </reaction>
</comment>
<comment type="pathway">
    <text>Cell wall biogenesis; cell wall polysaccharide biosynthesis.</text>
</comment>
<comment type="subunit">
    <text evidence="1">Monomer.</text>
</comment>
<comment type="subcellular location">
    <subcellularLocation>
        <location evidence="4">Cell outer membrane</location>
        <topology evidence="2">Lipid-anchor</topology>
    </subcellularLocation>
</comment>
<comment type="similarity">
    <text evidence="3 4">Belongs to the peptidase C40 family.</text>
</comment>
<keyword id="KW-0998">Cell outer membrane</keyword>
<keyword id="KW-0378">Hydrolase</keyword>
<keyword id="KW-0449">Lipoprotein</keyword>
<keyword id="KW-0472">Membrane</keyword>
<keyword id="KW-0564">Palmitate</keyword>
<keyword id="KW-0645">Protease</keyword>
<keyword id="KW-1185">Reference proteome</keyword>
<keyword id="KW-0732">Signal</keyword>
<keyword id="KW-0788">Thiol protease</keyword>